<protein>
    <recommendedName>
        <fullName>Stress response regulator protein 1</fullName>
    </recommendedName>
</protein>
<reference key="1">
    <citation type="journal article" date="2009" name="Genome Res.">
        <title>Comparative genomics of the fungal pathogens Candida dubliniensis and Candida albicans.</title>
        <authorList>
            <person name="Jackson A.P."/>
            <person name="Gamble J.A."/>
            <person name="Yeomans T."/>
            <person name="Moran G.P."/>
            <person name="Saunders D."/>
            <person name="Harris D."/>
            <person name="Aslett M."/>
            <person name="Barrell J.F."/>
            <person name="Butler G."/>
            <person name="Citiulo F."/>
            <person name="Coleman D.C."/>
            <person name="de Groot P.W.J."/>
            <person name="Goodwin T.J."/>
            <person name="Quail M.A."/>
            <person name="McQuillan J."/>
            <person name="Munro C.A."/>
            <person name="Pain A."/>
            <person name="Poulter R.T."/>
            <person name="Rajandream M.A."/>
            <person name="Renauld H."/>
            <person name="Spiering M.J."/>
            <person name="Tivey A."/>
            <person name="Gow N.A.R."/>
            <person name="Barrell B."/>
            <person name="Sullivan D.J."/>
            <person name="Berriman M."/>
        </authorList>
    </citation>
    <scope>NUCLEOTIDE SEQUENCE [LARGE SCALE GENOMIC DNA]</scope>
    <source>
        <strain>CD36 / ATCC MYA-646 / CBS 7987 / NCPF 3949 / NRRL Y-17841</strain>
    </source>
</reference>
<name>SRR1_CANDC</name>
<dbReference type="EMBL" id="FM992695">
    <property type="protein sequence ID" value="CAX40097.1"/>
    <property type="molecule type" value="Genomic_DNA"/>
</dbReference>
<dbReference type="RefSeq" id="XP_002422096.1">
    <property type="nucleotide sequence ID" value="XM_002422051.1"/>
</dbReference>
<dbReference type="SMR" id="B9WLY5"/>
<dbReference type="GeneID" id="8049716"/>
<dbReference type="KEGG" id="cdu:CD36_30940"/>
<dbReference type="CGD" id="CAL0000165779">
    <property type="gene designation" value="Cd36_30940"/>
</dbReference>
<dbReference type="VEuPathDB" id="FungiDB:CD36_30940"/>
<dbReference type="eggNOG" id="ENOG502SFN6">
    <property type="taxonomic scope" value="Eukaryota"/>
</dbReference>
<dbReference type="HOGENOM" id="CLU_065405_0_0_1"/>
<dbReference type="OrthoDB" id="303614at2759"/>
<dbReference type="Proteomes" id="UP000002605">
    <property type="component" value="Chromosome R"/>
</dbReference>
<dbReference type="GO" id="GO:0036180">
    <property type="term" value="P:filamentous growth of a population of unicellular organisms in response to biotic stimulus"/>
    <property type="evidence" value="ECO:0007669"/>
    <property type="project" value="UniProtKB-ARBA"/>
</dbReference>
<dbReference type="GO" id="GO:0000160">
    <property type="term" value="P:phosphorelay signal transduction system"/>
    <property type="evidence" value="ECO:0007669"/>
    <property type="project" value="InterPro"/>
</dbReference>
<dbReference type="GO" id="GO:1900445">
    <property type="term" value="P:positive regulation of filamentous growth of a population of unicellular organisms in response to biotic stimulus"/>
    <property type="evidence" value="ECO:0007669"/>
    <property type="project" value="UniProtKB-ARBA"/>
</dbReference>
<dbReference type="CDD" id="cd17546">
    <property type="entry name" value="REC_hyHK_CKI1_RcsC-like"/>
    <property type="match status" value="1"/>
</dbReference>
<dbReference type="Gene3D" id="3.40.50.2300">
    <property type="match status" value="1"/>
</dbReference>
<dbReference type="InterPro" id="IPR050595">
    <property type="entry name" value="Bact_response_regulator"/>
</dbReference>
<dbReference type="InterPro" id="IPR011006">
    <property type="entry name" value="CheY-like_superfamily"/>
</dbReference>
<dbReference type="InterPro" id="IPR001789">
    <property type="entry name" value="Sig_transdc_resp-reg_receiver"/>
</dbReference>
<dbReference type="PANTHER" id="PTHR44591:SF3">
    <property type="entry name" value="RESPONSE REGULATORY DOMAIN-CONTAINING PROTEIN"/>
    <property type="match status" value="1"/>
</dbReference>
<dbReference type="PANTHER" id="PTHR44591">
    <property type="entry name" value="STRESS RESPONSE REGULATOR PROTEIN 1"/>
    <property type="match status" value="1"/>
</dbReference>
<dbReference type="Pfam" id="PF00072">
    <property type="entry name" value="Response_reg"/>
    <property type="match status" value="1"/>
</dbReference>
<dbReference type="SMART" id="SM00448">
    <property type="entry name" value="REC"/>
    <property type="match status" value="1"/>
</dbReference>
<dbReference type="SUPFAM" id="SSF52172">
    <property type="entry name" value="CheY-like"/>
    <property type="match status" value="1"/>
</dbReference>
<dbReference type="PROSITE" id="PS50110">
    <property type="entry name" value="RESPONSE_REGULATORY"/>
    <property type="match status" value="1"/>
</dbReference>
<sequence length="285" mass="32574">MISMNPIMIRNNLSRSSSPAAPPITNHTSTVDYFSLKPKLSLDTSSQNDSISTQSSNNDDTHSDQQDHTLYTHNHYFDDDYDDDEDEDFDIRDQLLDPFDKITISNCNEEYYSPLTPFDDQTTSPQDSIISSKSSNKSTTVVPPPQFQLTLPKLTTYSFLIVDDNIINLKILNRILLKLFPKCHIVQIQDSKLVKDILHKQPFDSIFIDIEMPDVNGIDIAQFVRQDSKFDDMGMVAVTTRNSTQDLELFKQCGIDCTFHKPLNYSLDFMANSIDDIIITRKNKI</sequence>
<keyword id="KW-0597">Phosphoprotein</keyword>
<evidence type="ECO:0000250" key="1"/>
<evidence type="ECO:0000255" key="2">
    <source>
        <dbReference type="PROSITE-ProRule" id="PRU00169"/>
    </source>
</evidence>
<evidence type="ECO:0000256" key="3">
    <source>
        <dbReference type="SAM" id="MobiDB-lite"/>
    </source>
</evidence>
<organism>
    <name type="scientific">Candida dubliniensis (strain CD36 / ATCC MYA-646 / CBS 7987 / NCPF 3949 / NRRL Y-17841)</name>
    <name type="common">Yeast</name>
    <dbReference type="NCBI Taxonomy" id="573826"/>
    <lineage>
        <taxon>Eukaryota</taxon>
        <taxon>Fungi</taxon>
        <taxon>Dikarya</taxon>
        <taxon>Ascomycota</taxon>
        <taxon>Saccharomycotina</taxon>
        <taxon>Pichiomycetes</taxon>
        <taxon>Debaryomycetaceae</taxon>
        <taxon>Candida/Lodderomyces clade</taxon>
        <taxon>Candida</taxon>
    </lineage>
</organism>
<feature type="chain" id="PRO_0000413387" description="Stress response regulator protein 1">
    <location>
        <begin position="1"/>
        <end position="285"/>
    </location>
</feature>
<feature type="domain" description="Response regulatory" evidence="2">
    <location>
        <begin position="158"/>
        <end position="276"/>
    </location>
</feature>
<feature type="region of interest" description="Disordered" evidence="3">
    <location>
        <begin position="43"/>
        <end position="66"/>
    </location>
</feature>
<feature type="region of interest" description="Disordered" evidence="3">
    <location>
        <begin position="114"/>
        <end position="142"/>
    </location>
</feature>
<feature type="compositionally biased region" description="Low complexity" evidence="3">
    <location>
        <begin position="43"/>
        <end position="58"/>
    </location>
</feature>
<feature type="compositionally biased region" description="Low complexity" evidence="3">
    <location>
        <begin position="128"/>
        <end position="138"/>
    </location>
</feature>
<feature type="modified residue" description="4-aspartylphosphate" evidence="2">
    <location>
        <position position="209"/>
    </location>
</feature>
<gene>
    <name type="primary">SRR1</name>
    <name type="ORF">CD36_30940</name>
</gene>
<comment type="function">
    <text evidence="1">Required for stress adaptation, morphogenesis and virulence.</text>
</comment>
<proteinExistence type="inferred from homology"/>
<accession>B9WLY5</accession>